<dbReference type="EMBL" id="AC130360">
    <property type="status" value="NOT_ANNOTATED_CDS"/>
    <property type="molecule type" value="Genomic_DNA"/>
</dbReference>
<dbReference type="CCDS" id="CCDS78299.1"/>
<dbReference type="RefSeq" id="NP_001243803.1">
    <property type="nucleotide sequence ID" value="NM_001256874.1"/>
</dbReference>
<dbReference type="SMR" id="A6NCW7"/>
<dbReference type="FunCoup" id="A6NCW7">
    <property type="interactions" value="94"/>
</dbReference>
<dbReference type="STRING" id="9606.ENSP00000485243"/>
<dbReference type="MEROPS" id="C19.985"/>
<dbReference type="iPTMnet" id="A6NCW7"/>
<dbReference type="PhosphoSitePlus" id="A6NCW7"/>
<dbReference type="BioMuta" id="USP17L4"/>
<dbReference type="MassIVE" id="A6NCW7"/>
<dbReference type="PaxDb" id="9606-ENSP00000485243"/>
<dbReference type="Antibodypedia" id="76800">
    <property type="antibodies" value="3 antibodies from 1 providers"/>
</dbReference>
<dbReference type="DNASU" id="645402"/>
<dbReference type="Ensembl" id="ENST00000526929.1">
    <property type="protein sequence ID" value="ENSP00000485243.1"/>
    <property type="gene ID" value="ENSG00000236125.3"/>
</dbReference>
<dbReference type="GeneID" id="645402"/>
<dbReference type="KEGG" id="hsa:645402"/>
<dbReference type="MANE-Select" id="ENST00000526929.1">
    <property type="protein sequence ID" value="ENSP00000485243.1"/>
    <property type="RefSeq nucleotide sequence ID" value="NM_001256874.1"/>
    <property type="RefSeq protein sequence ID" value="NP_001243803.1"/>
</dbReference>
<dbReference type="UCSC" id="uc031tab.1">
    <property type="organism name" value="human"/>
</dbReference>
<dbReference type="AGR" id="HGNC:37176"/>
<dbReference type="CTD" id="645402"/>
<dbReference type="GeneCards" id="USP17L4"/>
<dbReference type="HGNC" id="HGNC:37176">
    <property type="gene designation" value="USP17L4"/>
</dbReference>
<dbReference type="HPA" id="ENSG00000236125">
    <property type="expression patterns" value="Not detected"/>
</dbReference>
<dbReference type="neXtProt" id="NX_A6NCW7"/>
<dbReference type="VEuPathDB" id="HostDB:ENSG00000236125"/>
<dbReference type="eggNOG" id="KOG1865">
    <property type="taxonomic scope" value="Eukaryota"/>
</dbReference>
<dbReference type="GeneTree" id="ENSGT00940000161948"/>
<dbReference type="HOGENOM" id="CLU_008279_10_0_1"/>
<dbReference type="InParanoid" id="A6NCW7"/>
<dbReference type="OrthoDB" id="9523253at2759"/>
<dbReference type="PAN-GO" id="A6NCW7">
    <property type="GO annotations" value="6 GO annotations based on evolutionary models"/>
</dbReference>
<dbReference type="PhylomeDB" id="A6NCW7"/>
<dbReference type="PathwayCommons" id="A6NCW7"/>
<dbReference type="Reactome" id="R-HSA-5689880">
    <property type="pathway name" value="Ub-specific processing proteases"/>
</dbReference>
<dbReference type="BioGRID-ORCS" id="645402">
    <property type="hits" value="12 hits in 221 CRISPR screens"/>
</dbReference>
<dbReference type="GenomeRNAi" id="645402"/>
<dbReference type="Pharos" id="A6NCW7">
    <property type="development level" value="Tdark"/>
</dbReference>
<dbReference type="PRO" id="PR:A6NCW7"/>
<dbReference type="Proteomes" id="UP000005640">
    <property type="component" value="Chromosome 8"/>
</dbReference>
<dbReference type="RNAct" id="A6NCW7">
    <property type="molecule type" value="protein"/>
</dbReference>
<dbReference type="Bgee" id="ENSG00000236125">
    <property type="expression patterns" value="Expressed in skin of abdomen"/>
</dbReference>
<dbReference type="GO" id="GO:0005829">
    <property type="term" value="C:cytosol"/>
    <property type="evidence" value="ECO:0000318"/>
    <property type="project" value="GO_Central"/>
</dbReference>
<dbReference type="GO" id="GO:0005783">
    <property type="term" value="C:endoplasmic reticulum"/>
    <property type="evidence" value="ECO:0007669"/>
    <property type="project" value="UniProtKB-SubCell"/>
</dbReference>
<dbReference type="GO" id="GO:0005634">
    <property type="term" value="C:nucleus"/>
    <property type="evidence" value="ECO:0000318"/>
    <property type="project" value="GO_Central"/>
</dbReference>
<dbReference type="GO" id="GO:0004843">
    <property type="term" value="F:cysteine-type deubiquitinase activity"/>
    <property type="evidence" value="ECO:0000318"/>
    <property type="project" value="GO_Central"/>
</dbReference>
<dbReference type="GO" id="GO:0016579">
    <property type="term" value="P:protein deubiquitination"/>
    <property type="evidence" value="ECO:0007669"/>
    <property type="project" value="InterPro"/>
</dbReference>
<dbReference type="GO" id="GO:0042981">
    <property type="term" value="P:regulation of apoptotic process"/>
    <property type="evidence" value="ECO:0000318"/>
    <property type="project" value="GO_Central"/>
</dbReference>
<dbReference type="GO" id="GO:0031647">
    <property type="term" value="P:regulation of protein stability"/>
    <property type="evidence" value="ECO:0000318"/>
    <property type="project" value="GO_Central"/>
</dbReference>
<dbReference type="CDD" id="cd02661">
    <property type="entry name" value="Peptidase_C19E"/>
    <property type="match status" value="1"/>
</dbReference>
<dbReference type="FunFam" id="3.90.70.10:FF:000070">
    <property type="entry name" value="Ubiquitin carboxyl-terminal hydrolase 17-like protein 17"/>
    <property type="match status" value="1"/>
</dbReference>
<dbReference type="Gene3D" id="3.90.70.10">
    <property type="entry name" value="Cysteine proteinases"/>
    <property type="match status" value="1"/>
</dbReference>
<dbReference type="InterPro" id="IPR038765">
    <property type="entry name" value="Papain-like_cys_pep_sf"/>
</dbReference>
<dbReference type="InterPro" id="IPR050164">
    <property type="entry name" value="Peptidase_C19"/>
</dbReference>
<dbReference type="InterPro" id="IPR001394">
    <property type="entry name" value="Peptidase_C19_UCH"/>
</dbReference>
<dbReference type="InterPro" id="IPR028889">
    <property type="entry name" value="USP_dom"/>
</dbReference>
<dbReference type="PANTHER" id="PTHR24006:SF651">
    <property type="entry name" value="INACTIVE UBIQUITIN CARBOXYL-TERMINAL HYDROLASE 17-LIKE PROTEIN 4-RELATED"/>
    <property type="match status" value="1"/>
</dbReference>
<dbReference type="PANTHER" id="PTHR24006">
    <property type="entry name" value="UBIQUITIN CARBOXYL-TERMINAL HYDROLASE"/>
    <property type="match status" value="1"/>
</dbReference>
<dbReference type="Pfam" id="PF00443">
    <property type="entry name" value="UCH"/>
    <property type="match status" value="1"/>
</dbReference>
<dbReference type="SUPFAM" id="SSF54001">
    <property type="entry name" value="Cysteine proteinases"/>
    <property type="match status" value="1"/>
</dbReference>
<dbReference type="PROSITE" id="PS50235">
    <property type="entry name" value="USP_3"/>
    <property type="match status" value="1"/>
</dbReference>
<accession>A6NCW7</accession>
<reference key="1">
    <citation type="journal article" date="2006" name="Nature">
        <title>DNA sequence and analysis of human chromosome 8.</title>
        <authorList>
            <person name="Nusbaum C."/>
            <person name="Mikkelsen T.S."/>
            <person name="Zody M.C."/>
            <person name="Asakawa S."/>
            <person name="Taudien S."/>
            <person name="Garber M."/>
            <person name="Kodira C.D."/>
            <person name="Schueler M.G."/>
            <person name="Shimizu A."/>
            <person name="Whittaker C.A."/>
            <person name="Chang J.L."/>
            <person name="Cuomo C.A."/>
            <person name="Dewar K."/>
            <person name="FitzGerald M.G."/>
            <person name="Yang X."/>
            <person name="Allen N.R."/>
            <person name="Anderson S."/>
            <person name="Asakawa T."/>
            <person name="Blechschmidt K."/>
            <person name="Bloom T."/>
            <person name="Borowsky M.L."/>
            <person name="Butler J."/>
            <person name="Cook A."/>
            <person name="Corum B."/>
            <person name="DeArellano K."/>
            <person name="DeCaprio D."/>
            <person name="Dooley K.T."/>
            <person name="Dorris L. III"/>
            <person name="Engels R."/>
            <person name="Gloeckner G."/>
            <person name="Hafez N."/>
            <person name="Hagopian D.S."/>
            <person name="Hall J.L."/>
            <person name="Ishikawa S.K."/>
            <person name="Jaffe D.B."/>
            <person name="Kamat A."/>
            <person name="Kudoh J."/>
            <person name="Lehmann R."/>
            <person name="Lokitsang T."/>
            <person name="Macdonald P."/>
            <person name="Major J.E."/>
            <person name="Matthews C.D."/>
            <person name="Mauceli E."/>
            <person name="Menzel U."/>
            <person name="Mihalev A.H."/>
            <person name="Minoshima S."/>
            <person name="Murayama Y."/>
            <person name="Naylor J.W."/>
            <person name="Nicol R."/>
            <person name="Nguyen C."/>
            <person name="O'Leary S.B."/>
            <person name="O'Neill K."/>
            <person name="Parker S.C.J."/>
            <person name="Polley A."/>
            <person name="Raymond C.K."/>
            <person name="Reichwald K."/>
            <person name="Rodriguez J."/>
            <person name="Sasaki T."/>
            <person name="Schilhabel M."/>
            <person name="Siddiqui R."/>
            <person name="Smith C.L."/>
            <person name="Sneddon T.P."/>
            <person name="Talamas J.A."/>
            <person name="Tenzin P."/>
            <person name="Topham K."/>
            <person name="Venkataraman V."/>
            <person name="Wen G."/>
            <person name="Yamazaki S."/>
            <person name="Young S.K."/>
            <person name="Zeng Q."/>
            <person name="Zimmer A.R."/>
            <person name="Rosenthal A."/>
            <person name="Birren B.W."/>
            <person name="Platzer M."/>
            <person name="Shimizu N."/>
            <person name="Lander E.S."/>
        </authorList>
    </citation>
    <scope>NUCLEOTIDE SEQUENCE [LARGE SCALE GENOMIC DNA]</scope>
</reference>
<reference key="2">
    <citation type="journal article" date="2005" name="Genomics">
        <title>The DUB/USP17 deubiquitinating enzymes, a multigene family within a tandemly repeated sequence.</title>
        <authorList>
            <person name="Burrows J.F."/>
            <person name="McGrattan M.J."/>
            <person name="Johnston J.A."/>
        </authorList>
    </citation>
    <scope>NOMENCLATURE</scope>
</reference>
<reference key="3">
    <citation type="journal article" date="2006" name="BMC Genomics">
        <title>Hyaluronan- and RNA-binding deubiquitinating enzymes of USP17 family members associated with cell viability.</title>
        <authorList>
            <person name="Shin J.-M."/>
            <person name="Yoo K.-J."/>
            <person name="Kim M.-S."/>
            <person name="Kim D."/>
            <person name="Baek K.-H."/>
        </authorList>
    </citation>
    <scope>NOMENCLATURE</scope>
</reference>
<name>U17L4_HUMAN</name>
<organism>
    <name type="scientific">Homo sapiens</name>
    <name type="common">Human</name>
    <dbReference type="NCBI Taxonomy" id="9606"/>
    <lineage>
        <taxon>Eukaryota</taxon>
        <taxon>Metazoa</taxon>
        <taxon>Chordata</taxon>
        <taxon>Craniata</taxon>
        <taxon>Vertebrata</taxon>
        <taxon>Euteleostomi</taxon>
        <taxon>Mammalia</taxon>
        <taxon>Eutheria</taxon>
        <taxon>Euarchontoglires</taxon>
        <taxon>Primates</taxon>
        <taxon>Haplorrhini</taxon>
        <taxon>Catarrhini</taxon>
        <taxon>Hominidae</taxon>
        <taxon>Homo</taxon>
    </lineage>
</organism>
<gene>
    <name type="primary">USP17L4</name>
</gene>
<sequence>MGDDSLYLGGEWQFNHFSKLTSSRPDAAFAEIQRTSLPEKSPLSSETRVDLCDDLAPVARQLAPREKLPLSSRRPAAVGAGLQNMGNTCYENASLQCLTYTLPLANYMLSREHSQTCQRPKCCMLCTMQAHITWALHSPGHVIQPSQALAAGFHRGKQEDVHEFLMFTVDAMKKACLPGHKQVDHHSKDTTLIHQIFGGCWRSQIKCLHCHGISDTFDPYLDIALDIQAAQSVKQALEQLVKPEELNGENAYHCGLCLQRAPASNTLTLHTSAKVLILVLKRFSDVAGNKLAKNVQYPECLDMQPYMSQQNTGPLVYVLYAVLVHAGWSCHDGYYFSYVKAQEGQWYKMDDAEVTVCSITSVLSQQAYVLFYIQKSEWERHSESVSRGREPRALGAEDTDRPATQGELKRDHPCLQVPELDEHLVERATEESTLDHWKFPQEQNKMKPEFNVRKVEGTLPPNVLVIHQSKYKCGMKNHHPEQQSSLLNLSSMNSTDQESMNTGTLASLQGRTRRSKGKNKHSKRSLLVCQ</sequence>
<protein>
    <recommendedName>
        <fullName>Inactive ubiquitin carboxyl-terminal hydrolase 17-like protein 4</fullName>
    </recommendedName>
</protein>
<keyword id="KW-0256">Endoplasmic reticulum</keyword>
<keyword id="KW-0539">Nucleus</keyword>
<keyword id="KW-1185">Reference proteome</keyword>
<evidence type="ECO:0000250" key="1"/>
<evidence type="ECO:0000256" key="2">
    <source>
        <dbReference type="SAM" id="MobiDB-lite"/>
    </source>
</evidence>
<evidence type="ECO:0000305" key="3"/>
<proteinExistence type="inferred from homology"/>
<comment type="subcellular location">
    <subcellularLocation>
        <location evidence="1">Nucleus</location>
    </subcellularLocation>
    <subcellularLocation>
        <location evidence="1">Endoplasmic reticulum</location>
    </subcellularLocation>
</comment>
<comment type="similarity">
    <text evidence="3">Belongs to the peptidase C19 family. USP17 subfamily.</text>
</comment>
<comment type="caution">
    <text evidence="3">The RS447 megasatellite DNA is a highly polymorphic conserved tandem repetitive sequence which contains a copy of the USP17 gene. It is present with an interindividual variation in copy number, ranging from 20 to 103, and can be found in the genome both on chromosome 4 and chromosome 8. The high similarity between the UPS17-like genes makes impossible to clearly assign data to one of the genes of the family. Oligonucleotides designed in RNAi experiments are for instance not specific of a given UPS17-like gene.</text>
</comment>
<comment type="caution">
    <text evidence="3">Tyr-334 is present instead of the conserved His which is expected to be an active site residue suggesting that this protein has lost its catalytic activity.</text>
</comment>
<feature type="chain" id="PRO_0000331646" description="Inactive ubiquitin carboxyl-terminal hydrolase 17-like protein 4">
    <location>
        <begin position="1"/>
        <end position="530"/>
    </location>
</feature>
<feature type="domain" description="USP">
    <location>
        <begin position="80"/>
        <end position="375"/>
    </location>
</feature>
<feature type="region of interest" description="Disordered" evidence="2">
    <location>
        <begin position="382"/>
        <end position="410"/>
    </location>
</feature>
<feature type="region of interest" description="Disordered" evidence="2">
    <location>
        <begin position="493"/>
        <end position="530"/>
    </location>
</feature>
<feature type="compositionally biased region" description="Basic and acidic residues" evidence="2">
    <location>
        <begin position="382"/>
        <end position="392"/>
    </location>
</feature>
<feature type="compositionally biased region" description="Polar residues" evidence="2">
    <location>
        <begin position="495"/>
        <end position="510"/>
    </location>
</feature>
<feature type="compositionally biased region" description="Basic residues" evidence="2">
    <location>
        <begin position="511"/>
        <end position="524"/>
    </location>
</feature>